<evidence type="ECO:0000255" key="1">
    <source>
        <dbReference type="HAMAP-Rule" id="MF_01326"/>
    </source>
</evidence>
<evidence type="ECO:0000305" key="2"/>
<proteinExistence type="inferred from homology"/>
<sequence>MAAKIRREDEVIVLAGKDKGKRAKVSQVLPTGKLIVEGINLVKKHQKPNPQLGVAGGIVEKEAPIQASNVAIFNSATGKADRVGFRFEDGKKVRFFKSNSELVK</sequence>
<dbReference type="EMBL" id="CP000563">
    <property type="protein sequence ID" value="ABN63624.1"/>
    <property type="molecule type" value="Genomic_DNA"/>
</dbReference>
<dbReference type="RefSeq" id="WP_006083589.1">
    <property type="nucleotide sequence ID" value="NC_009052.1"/>
</dbReference>
<dbReference type="SMR" id="A3DA61"/>
<dbReference type="STRING" id="325240.Sbal_4159"/>
<dbReference type="GeneID" id="11770568"/>
<dbReference type="KEGG" id="sbl:Sbal_4159"/>
<dbReference type="HOGENOM" id="CLU_093315_2_2_6"/>
<dbReference type="OrthoDB" id="9807419at2"/>
<dbReference type="Proteomes" id="UP000001557">
    <property type="component" value="Chromosome"/>
</dbReference>
<dbReference type="GO" id="GO:1990904">
    <property type="term" value="C:ribonucleoprotein complex"/>
    <property type="evidence" value="ECO:0007669"/>
    <property type="project" value="UniProtKB-KW"/>
</dbReference>
<dbReference type="GO" id="GO:0005840">
    <property type="term" value="C:ribosome"/>
    <property type="evidence" value="ECO:0007669"/>
    <property type="project" value="UniProtKB-KW"/>
</dbReference>
<dbReference type="GO" id="GO:0019843">
    <property type="term" value="F:rRNA binding"/>
    <property type="evidence" value="ECO:0007669"/>
    <property type="project" value="UniProtKB-UniRule"/>
</dbReference>
<dbReference type="GO" id="GO:0003735">
    <property type="term" value="F:structural constituent of ribosome"/>
    <property type="evidence" value="ECO:0007669"/>
    <property type="project" value="InterPro"/>
</dbReference>
<dbReference type="GO" id="GO:0006412">
    <property type="term" value="P:translation"/>
    <property type="evidence" value="ECO:0007669"/>
    <property type="project" value="UniProtKB-UniRule"/>
</dbReference>
<dbReference type="CDD" id="cd06089">
    <property type="entry name" value="KOW_RPL26"/>
    <property type="match status" value="1"/>
</dbReference>
<dbReference type="FunFam" id="2.30.30.30:FF:000004">
    <property type="entry name" value="50S ribosomal protein L24"/>
    <property type="match status" value="1"/>
</dbReference>
<dbReference type="Gene3D" id="2.30.30.30">
    <property type="match status" value="1"/>
</dbReference>
<dbReference type="HAMAP" id="MF_01326_B">
    <property type="entry name" value="Ribosomal_uL24_B"/>
    <property type="match status" value="1"/>
</dbReference>
<dbReference type="InterPro" id="IPR005824">
    <property type="entry name" value="KOW"/>
</dbReference>
<dbReference type="InterPro" id="IPR014722">
    <property type="entry name" value="Rib_uL2_dom2"/>
</dbReference>
<dbReference type="InterPro" id="IPR003256">
    <property type="entry name" value="Ribosomal_uL24"/>
</dbReference>
<dbReference type="InterPro" id="IPR005825">
    <property type="entry name" value="Ribosomal_uL24_CS"/>
</dbReference>
<dbReference type="InterPro" id="IPR041988">
    <property type="entry name" value="Ribosomal_uL24_KOW"/>
</dbReference>
<dbReference type="InterPro" id="IPR008991">
    <property type="entry name" value="Translation_prot_SH3-like_sf"/>
</dbReference>
<dbReference type="NCBIfam" id="TIGR01079">
    <property type="entry name" value="rplX_bact"/>
    <property type="match status" value="1"/>
</dbReference>
<dbReference type="PANTHER" id="PTHR12903">
    <property type="entry name" value="MITOCHONDRIAL RIBOSOMAL PROTEIN L24"/>
    <property type="match status" value="1"/>
</dbReference>
<dbReference type="Pfam" id="PF00467">
    <property type="entry name" value="KOW"/>
    <property type="match status" value="1"/>
</dbReference>
<dbReference type="Pfam" id="PF17136">
    <property type="entry name" value="ribosomal_L24"/>
    <property type="match status" value="1"/>
</dbReference>
<dbReference type="SMART" id="SM00739">
    <property type="entry name" value="KOW"/>
    <property type="match status" value="1"/>
</dbReference>
<dbReference type="SUPFAM" id="SSF50104">
    <property type="entry name" value="Translation proteins SH3-like domain"/>
    <property type="match status" value="1"/>
</dbReference>
<dbReference type="PROSITE" id="PS01108">
    <property type="entry name" value="RIBOSOMAL_L24"/>
    <property type="match status" value="1"/>
</dbReference>
<comment type="function">
    <text evidence="1">One of two assembly initiator proteins, it binds directly to the 5'-end of the 23S rRNA, where it nucleates assembly of the 50S subunit.</text>
</comment>
<comment type="function">
    <text evidence="1">One of the proteins that surrounds the polypeptide exit tunnel on the outside of the subunit.</text>
</comment>
<comment type="subunit">
    <text evidence="1">Part of the 50S ribosomal subunit.</text>
</comment>
<comment type="similarity">
    <text evidence="1">Belongs to the universal ribosomal protein uL24 family.</text>
</comment>
<name>RL24_SHEB5</name>
<protein>
    <recommendedName>
        <fullName evidence="1">Large ribosomal subunit protein uL24</fullName>
    </recommendedName>
    <alternativeName>
        <fullName evidence="2">50S ribosomal protein L24</fullName>
    </alternativeName>
</protein>
<gene>
    <name evidence="1" type="primary">rplX</name>
    <name type="ordered locus">Sbal_4159</name>
</gene>
<organism>
    <name type="scientific">Shewanella baltica (strain OS155 / ATCC BAA-1091)</name>
    <dbReference type="NCBI Taxonomy" id="325240"/>
    <lineage>
        <taxon>Bacteria</taxon>
        <taxon>Pseudomonadati</taxon>
        <taxon>Pseudomonadota</taxon>
        <taxon>Gammaproteobacteria</taxon>
        <taxon>Alteromonadales</taxon>
        <taxon>Shewanellaceae</taxon>
        <taxon>Shewanella</taxon>
    </lineage>
</organism>
<reference key="1">
    <citation type="submission" date="2007-02" db="EMBL/GenBank/DDBJ databases">
        <title>Complete sequence of chromosome of Shewanella baltica OS155.</title>
        <authorList>
            <consortium name="US DOE Joint Genome Institute"/>
            <person name="Copeland A."/>
            <person name="Lucas S."/>
            <person name="Lapidus A."/>
            <person name="Barry K."/>
            <person name="Detter J.C."/>
            <person name="Glavina del Rio T."/>
            <person name="Hammon N."/>
            <person name="Israni S."/>
            <person name="Dalin E."/>
            <person name="Tice H."/>
            <person name="Pitluck S."/>
            <person name="Sims D.R."/>
            <person name="Brettin T."/>
            <person name="Bruce D."/>
            <person name="Han C."/>
            <person name="Tapia R."/>
            <person name="Brainard J."/>
            <person name="Schmutz J."/>
            <person name="Larimer F."/>
            <person name="Land M."/>
            <person name="Hauser L."/>
            <person name="Kyrpides N."/>
            <person name="Mikhailova N."/>
            <person name="Brettar I."/>
            <person name="Klappenbach J."/>
            <person name="Konstantinidis K."/>
            <person name="Rodrigues J."/>
            <person name="Tiedje J."/>
            <person name="Richardson P."/>
        </authorList>
    </citation>
    <scope>NUCLEOTIDE SEQUENCE [LARGE SCALE GENOMIC DNA]</scope>
    <source>
        <strain>OS155 / ATCC BAA-1091</strain>
    </source>
</reference>
<keyword id="KW-1185">Reference proteome</keyword>
<keyword id="KW-0687">Ribonucleoprotein</keyword>
<keyword id="KW-0689">Ribosomal protein</keyword>
<keyword id="KW-0694">RNA-binding</keyword>
<keyword id="KW-0699">rRNA-binding</keyword>
<accession>A3DA61</accession>
<feature type="chain" id="PRO_1000052303" description="Large ribosomal subunit protein uL24">
    <location>
        <begin position="1"/>
        <end position="104"/>
    </location>
</feature>